<feature type="chain" id="PRO_1000116475" description="UDP-N-acetylglucosamine--N-acetylmuramyl-(pentapeptide) pyrophosphoryl-undecaprenol N-acetylglucosamine transferase">
    <location>
        <begin position="1"/>
        <end position="355"/>
    </location>
</feature>
<feature type="binding site" evidence="1">
    <location>
        <begin position="15"/>
        <end position="17"/>
    </location>
    <ligand>
        <name>UDP-N-acetyl-alpha-D-glucosamine</name>
        <dbReference type="ChEBI" id="CHEBI:57705"/>
    </ligand>
</feature>
<feature type="binding site" evidence="1">
    <location>
        <position position="127"/>
    </location>
    <ligand>
        <name>UDP-N-acetyl-alpha-D-glucosamine</name>
        <dbReference type="ChEBI" id="CHEBI:57705"/>
    </ligand>
</feature>
<feature type="binding site" evidence="1">
    <location>
        <position position="163"/>
    </location>
    <ligand>
        <name>UDP-N-acetyl-alpha-D-glucosamine</name>
        <dbReference type="ChEBI" id="CHEBI:57705"/>
    </ligand>
</feature>
<feature type="binding site" evidence="1">
    <location>
        <position position="191"/>
    </location>
    <ligand>
        <name>UDP-N-acetyl-alpha-D-glucosamine</name>
        <dbReference type="ChEBI" id="CHEBI:57705"/>
    </ligand>
</feature>
<feature type="binding site" evidence="1">
    <location>
        <position position="244"/>
    </location>
    <ligand>
        <name>UDP-N-acetyl-alpha-D-glucosamine</name>
        <dbReference type="ChEBI" id="CHEBI:57705"/>
    </ligand>
</feature>
<feature type="binding site" evidence="1">
    <location>
        <begin position="263"/>
        <end position="268"/>
    </location>
    <ligand>
        <name>UDP-N-acetyl-alpha-D-glucosamine</name>
        <dbReference type="ChEBI" id="CHEBI:57705"/>
    </ligand>
</feature>
<feature type="binding site" evidence="1">
    <location>
        <position position="288"/>
    </location>
    <ligand>
        <name>UDP-N-acetyl-alpha-D-glucosamine</name>
        <dbReference type="ChEBI" id="CHEBI:57705"/>
    </ligand>
</feature>
<gene>
    <name evidence="1" type="primary">murG</name>
    <name type="ordered locus">ECS88_0093</name>
</gene>
<dbReference type="EC" id="2.4.1.227" evidence="1"/>
<dbReference type="EMBL" id="CU928161">
    <property type="protein sequence ID" value="CAR01459.1"/>
    <property type="molecule type" value="Genomic_DNA"/>
</dbReference>
<dbReference type="RefSeq" id="WP_000016562.1">
    <property type="nucleotide sequence ID" value="NC_011742.1"/>
</dbReference>
<dbReference type="SMR" id="B7MAL3"/>
<dbReference type="CAZy" id="GT28">
    <property type="family name" value="Glycosyltransferase Family 28"/>
</dbReference>
<dbReference type="KEGG" id="ecz:ECS88_0093"/>
<dbReference type="HOGENOM" id="CLU_037404_2_0_6"/>
<dbReference type="UniPathway" id="UPA00219"/>
<dbReference type="Proteomes" id="UP000000747">
    <property type="component" value="Chromosome"/>
</dbReference>
<dbReference type="GO" id="GO:0005886">
    <property type="term" value="C:plasma membrane"/>
    <property type="evidence" value="ECO:0007669"/>
    <property type="project" value="UniProtKB-SubCell"/>
</dbReference>
<dbReference type="GO" id="GO:0051991">
    <property type="term" value="F:UDP-N-acetyl-D-glucosamine:N-acetylmuramoyl-L-alanyl-D-glutamyl-meso-2,6-diaminopimelyl-D-alanyl-D-alanine-diphosphoundecaprenol 4-beta-N-acetylglucosaminlytransferase activity"/>
    <property type="evidence" value="ECO:0007669"/>
    <property type="project" value="RHEA"/>
</dbReference>
<dbReference type="GO" id="GO:0050511">
    <property type="term" value="F:undecaprenyldiphospho-muramoylpentapeptide beta-N-acetylglucosaminyltransferase activity"/>
    <property type="evidence" value="ECO:0007669"/>
    <property type="project" value="UniProtKB-UniRule"/>
</dbReference>
<dbReference type="GO" id="GO:0005975">
    <property type="term" value="P:carbohydrate metabolic process"/>
    <property type="evidence" value="ECO:0007669"/>
    <property type="project" value="InterPro"/>
</dbReference>
<dbReference type="GO" id="GO:0051301">
    <property type="term" value="P:cell division"/>
    <property type="evidence" value="ECO:0007669"/>
    <property type="project" value="UniProtKB-KW"/>
</dbReference>
<dbReference type="GO" id="GO:0071555">
    <property type="term" value="P:cell wall organization"/>
    <property type="evidence" value="ECO:0007669"/>
    <property type="project" value="UniProtKB-KW"/>
</dbReference>
<dbReference type="GO" id="GO:0030259">
    <property type="term" value="P:lipid glycosylation"/>
    <property type="evidence" value="ECO:0007669"/>
    <property type="project" value="UniProtKB-UniRule"/>
</dbReference>
<dbReference type="GO" id="GO:0009252">
    <property type="term" value="P:peptidoglycan biosynthetic process"/>
    <property type="evidence" value="ECO:0007669"/>
    <property type="project" value="UniProtKB-UniRule"/>
</dbReference>
<dbReference type="GO" id="GO:0008360">
    <property type="term" value="P:regulation of cell shape"/>
    <property type="evidence" value="ECO:0007669"/>
    <property type="project" value="UniProtKB-KW"/>
</dbReference>
<dbReference type="CDD" id="cd03785">
    <property type="entry name" value="GT28_MurG"/>
    <property type="match status" value="1"/>
</dbReference>
<dbReference type="FunFam" id="3.40.50.2000:FF:000016">
    <property type="entry name" value="UDP-N-acetylglucosamine--N-acetylmuramyl-(pentapeptide) pyrophosphoryl-undecaprenol N-acetylglucosamine transferase"/>
    <property type="match status" value="1"/>
</dbReference>
<dbReference type="FunFam" id="3.40.50.2000:FF:000018">
    <property type="entry name" value="UDP-N-acetylglucosamine--N-acetylmuramyl-(pentapeptide) pyrophosphoryl-undecaprenol N-acetylglucosamine transferase"/>
    <property type="match status" value="1"/>
</dbReference>
<dbReference type="Gene3D" id="3.40.50.2000">
    <property type="entry name" value="Glycogen Phosphorylase B"/>
    <property type="match status" value="2"/>
</dbReference>
<dbReference type="HAMAP" id="MF_00033">
    <property type="entry name" value="MurG"/>
    <property type="match status" value="1"/>
</dbReference>
<dbReference type="InterPro" id="IPR006009">
    <property type="entry name" value="GlcNAc_MurG"/>
</dbReference>
<dbReference type="InterPro" id="IPR007235">
    <property type="entry name" value="Glyco_trans_28_C"/>
</dbReference>
<dbReference type="InterPro" id="IPR004276">
    <property type="entry name" value="GlycoTrans_28_N"/>
</dbReference>
<dbReference type="NCBIfam" id="TIGR01133">
    <property type="entry name" value="murG"/>
    <property type="match status" value="1"/>
</dbReference>
<dbReference type="PANTHER" id="PTHR21015:SF22">
    <property type="entry name" value="GLYCOSYLTRANSFERASE"/>
    <property type="match status" value="1"/>
</dbReference>
<dbReference type="PANTHER" id="PTHR21015">
    <property type="entry name" value="UDP-N-ACETYLGLUCOSAMINE--N-ACETYLMURAMYL-(PENTAPEPTIDE) PYROPHOSPHORYL-UNDECAPRENOL N-ACETYLGLUCOSAMINE TRANSFERASE 1"/>
    <property type="match status" value="1"/>
</dbReference>
<dbReference type="Pfam" id="PF04101">
    <property type="entry name" value="Glyco_tran_28_C"/>
    <property type="match status" value="1"/>
</dbReference>
<dbReference type="Pfam" id="PF03033">
    <property type="entry name" value="Glyco_transf_28"/>
    <property type="match status" value="1"/>
</dbReference>
<dbReference type="SUPFAM" id="SSF53756">
    <property type="entry name" value="UDP-Glycosyltransferase/glycogen phosphorylase"/>
    <property type="match status" value="1"/>
</dbReference>
<keyword id="KW-0131">Cell cycle</keyword>
<keyword id="KW-0132">Cell division</keyword>
<keyword id="KW-0997">Cell inner membrane</keyword>
<keyword id="KW-1003">Cell membrane</keyword>
<keyword id="KW-0133">Cell shape</keyword>
<keyword id="KW-0961">Cell wall biogenesis/degradation</keyword>
<keyword id="KW-0328">Glycosyltransferase</keyword>
<keyword id="KW-0472">Membrane</keyword>
<keyword id="KW-0573">Peptidoglycan synthesis</keyword>
<keyword id="KW-1185">Reference proteome</keyword>
<keyword id="KW-0808">Transferase</keyword>
<accession>B7MAL3</accession>
<protein>
    <recommendedName>
        <fullName evidence="1">UDP-N-acetylglucosamine--N-acetylmuramyl-(pentapeptide) pyrophosphoryl-undecaprenol N-acetylglucosamine transferase</fullName>
        <ecNumber evidence="1">2.4.1.227</ecNumber>
    </recommendedName>
    <alternativeName>
        <fullName evidence="1">Undecaprenyl-PP-MurNAc-pentapeptide-UDPGlcNAc GlcNAc transferase</fullName>
    </alternativeName>
</protein>
<comment type="function">
    <text evidence="1">Cell wall formation. Catalyzes the transfer of a GlcNAc subunit on undecaprenyl-pyrophosphoryl-MurNAc-pentapeptide (lipid intermediate I) to form undecaprenyl-pyrophosphoryl-MurNAc-(pentapeptide)GlcNAc (lipid intermediate II).</text>
</comment>
<comment type="catalytic activity">
    <reaction evidence="1">
        <text>di-trans,octa-cis-undecaprenyl diphospho-N-acetyl-alpha-D-muramoyl-L-alanyl-D-glutamyl-meso-2,6-diaminopimeloyl-D-alanyl-D-alanine + UDP-N-acetyl-alpha-D-glucosamine = di-trans,octa-cis-undecaprenyl diphospho-[N-acetyl-alpha-D-glucosaminyl-(1-&gt;4)]-N-acetyl-alpha-D-muramoyl-L-alanyl-D-glutamyl-meso-2,6-diaminopimeloyl-D-alanyl-D-alanine + UDP + H(+)</text>
        <dbReference type="Rhea" id="RHEA:31227"/>
        <dbReference type="ChEBI" id="CHEBI:15378"/>
        <dbReference type="ChEBI" id="CHEBI:57705"/>
        <dbReference type="ChEBI" id="CHEBI:58223"/>
        <dbReference type="ChEBI" id="CHEBI:61387"/>
        <dbReference type="ChEBI" id="CHEBI:61388"/>
        <dbReference type="EC" id="2.4.1.227"/>
    </reaction>
</comment>
<comment type="pathway">
    <text evidence="1">Cell wall biogenesis; peptidoglycan biosynthesis.</text>
</comment>
<comment type="subcellular location">
    <subcellularLocation>
        <location evidence="1">Cell inner membrane</location>
        <topology evidence="1">Peripheral membrane protein</topology>
        <orientation evidence="1">Cytoplasmic side</orientation>
    </subcellularLocation>
</comment>
<comment type="similarity">
    <text evidence="1">Belongs to the glycosyltransferase 28 family. MurG subfamily.</text>
</comment>
<organism>
    <name type="scientific">Escherichia coli O45:K1 (strain S88 / ExPEC)</name>
    <dbReference type="NCBI Taxonomy" id="585035"/>
    <lineage>
        <taxon>Bacteria</taxon>
        <taxon>Pseudomonadati</taxon>
        <taxon>Pseudomonadota</taxon>
        <taxon>Gammaproteobacteria</taxon>
        <taxon>Enterobacterales</taxon>
        <taxon>Enterobacteriaceae</taxon>
        <taxon>Escherichia</taxon>
    </lineage>
</organism>
<proteinExistence type="inferred from homology"/>
<evidence type="ECO:0000255" key="1">
    <source>
        <dbReference type="HAMAP-Rule" id="MF_00033"/>
    </source>
</evidence>
<sequence>MSGQGKRLMVMAGGTGGHVFPGLAVAHHLMAQGWQVRWLGTADRMEADLVPKHGIEIDFIRISGLRGKGIKALIAAPLRIFNAWRQARAIMKAYKPDVVLGMGGYVSGPGGLAAWSLGIPVVLHEQNGIAGLTNKWLAKIATKVMQAFPGAFPNAEVVGNPVRTDVLALPLPQQRLAGREGPVRVLVVGGSQGARILNQTMPQVAAKLGDSVTIWHQSGKGSQQSVEQAYAEAGQPQHKVTEFIDDMAAAYAWADVVVCRSGALTVSEIAAAGLPALFVPFQHKDRQQYWNALPLEKAGAAKIIEQSQLSVDAVANTLAGWSREILLTMAERARAASIPDATERVANEVSRAARA</sequence>
<reference key="1">
    <citation type="journal article" date="2009" name="PLoS Genet.">
        <title>Organised genome dynamics in the Escherichia coli species results in highly diverse adaptive paths.</title>
        <authorList>
            <person name="Touchon M."/>
            <person name="Hoede C."/>
            <person name="Tenaillon O."/>
            <person name="Barbe V."/>
            <person name="Baeriswyl S."/>
            <person name="Bidet P."/>
            <person name="Bingen E."/>
            <person name="Bonacorsi S."/>
            <person name="Bouchier C."/>
            <person name="Bouvet O."/>
            <person name="Calteau A."/>
            <person name="Chiapello H."/>
            <person name="Clermont O."/>
            <person name="Cruveiller S."/>
            <person name="Danchin A."/>
            <person name="Diard M."/>
            <person name="Dossat C."/>
            <person name="Karoui M.E."/>
            <person name="Frapy E."/>
            <person name="Garry L."/>
            <person name="Ghigo J.M."/>
            <person name="Gilles A.M."/>
            <person name="Johnson J."/>
            <person name="Le Bouguenec C."/>
            <person name="Lescat M."/>
            <person name="Mangenot S."/>
            <person name="Martinez-Jehanne V."/>
            <person name="Matic I."/>
            <person name="Nassif X."/>
            <person name="Oztas S."/>
            <person name="Petit M.A."/>
            <person name="Pichon C."/>
            <person name="Rouy Z."/>
            <person name="Ruf C.S."/>
            <person name="Schneider D."/>
            <person name="Tourret J."/>
            <person name="Vacherie B."/>
            <person name="Vallenet D."/>
            <person name="Medigue C."/>
            <person name="Rocha E.P.C."/>
            <person name="Denamur E."/>
        </authorList>
    </citation>
    <scope>NUCLEOTIDE SEQUENCE [LARGE SCALE GENOMIC DNA]</scope>
    <source>
        <strain>S88 / ExPEC</strain>
    </source>
</reference>
<name>MURG_ECO45</name>